<organism>
    <name type="scientific">Bacillus cereus (strain ATCC 10987 / NRS 248)</name>
    <dbReference type="NCBI Taxonomy" id="222523"/>
    <lineage>
        <taxon>Bacteria</taxon>
        <taxon>Bacillati</taxon>
        <taxon>Bacillota</taxon>
        <taxon>Bacilli</taxon>
        <taxon>Bacillales</taxon>
        <taxon>Bacillaceae</taxon>
        <taxon>Bacillus</taxon>
        <taxon>Bacillus cereus group</taxon>
    </lineage>
</organism>
<keyword id="KW-0028">Amino-acid biosynthesis</keyword>
<keyword id="KW-0055">Arginine biosynthesis</keyword>
<keyword id="KW-0963">Cytoplasm</keyword>
<keyword id="KW-0456">Lyase</keyword>
<comment type="catalytic activity">
    <reaction evidence="1">
        <text>2-(N(omega)-L-arginino)succinate = fumarate + L-arginine</text>
        <dbReference type="Rhea" id="RHEA:24020"/>
        <dbReference type="ChEBI" id="CHEBI:29806"/>
        <dbReference type="ChEBI" id="CHEBI:32682"/>
        <dbReference type="ChEBI" id="CHEBI:57472"/>
        <dbReference type="EC" id="4.3.2.1"/>
    </reaction>
</comment>
<comment type="pathway">
    <text evidence="1">Amino-acid biosynthesis; L-arginine biosynthesis; L-arginine from L-ornithine and carbamoyl phosphate: step 3/3.</text>
</comment>
<comment type="subcellular location">
    <subcellularLocation>
        <location evidence="1">Cytoplasm</location>
    </subcellularLocation>
</comment>
<comment type="similarity">
    <text evidence="1">Belongs to the lyase 1 family. Argininosuccinate lyase subfamily.</text>
</comment>
<evidence type="ECO:0000255" key="1">
    <source>
        <dbReference type="HAMAP-Rule" id="MF_00006"/>
    </source>
</evidence>
<accession>Q72ZA4</accession>
<reference key="1">
    <citation type="journal article" date="2004" name="Nucleic Acids Res.">
        <title>The genome sequence of Bacillus cereus ATCC 10987 reveals metabolic adaptations and a large plasmid related to Bacillus anthracis pXO1.</title>
        <authorList>
            <person name="Rasko D.A."/>
            <person name="Ravel J."/>
            <person name="Oekstad O.A."/>
            <person name="Helgason E."/>
            <person name="Cer R.Z."/>
            <person name="Jiang L."/>
            <person name="Shores K.A."/>
            <person name="Fouts D.E."/>
            <person name="Tourasse N.J."/>
            <person name="Angiuoli S.V."/>
            <person name="Kolonay J.F."/>
            <person name="Nelson W.C."/>
            <person name="Kolstoe A.-B."/>
            <person name="Fraser C.M."/>
            <person name="Read T.D."/>
        </authorList>
    </citation>
    <scope>NUCLEOTIDE SEQUENCE [LARGE SCALE GENOMIC DNA]</scope>
    <source>
        <strain>ATCC 10987 / NRS 248</strain>
    </source>
</reference>
<feature type="chain" id="PRO_0000137735" description="Argininosuccinate lyase">
    <location>
        <begin position="1"/>
        <end position="462"/>
    </location>
</feature>
<sequence length="462" mass="52183">MSKLWGGRFTEEAEAWVEEFGASISFDQQLVNQDINGSIAHVTMLAKQGIVTKEEAEKIKIGLQYLLEEAKQNKLHFSVEAEDIHLNIEKMLIEKIGEVGGKLHTGRSRNDQVATDMHLYLKEKVEHIIKATKQLQTVLVHQAENNIETIMPGYTHLQRAQPISFAHHILAYFWMLERDVNRYEDSLKRINISPLGAGALAGTTFPIDREYSAELLGFNGMYENSLDAVSDRDFILEFLSNSSMLMMHLSRFCEELILWSSQEFQFIEMSDQYATGSSIMPQKKNPDMAELIRGKTGRVYGNLFSLLTVMKGLPLAYNKDLQEDKEGMFDTVKTVEGCLHIMAGMLETMTVNKEKMGQAVTQDFSNATEIADYLANKGLPFRQAHEIVGKLVLHCTQKGIYLVDVPLATYKEMSSLFEEDLYEVLSPYAAVKRRNSAGGTGFEQIEKALEKAKGLTKEVIKN</sequence>
<proteinExistence type="inferred from homology"/>
<protein>
    <recommendedName>
        <fullName evidence="1">Argininosuccinate lyase</fullName>
        <shortName evidence="1">ASAL</shortName>
        <ecNumber evidence="1">4.3.2.1</ecNumber>
    </recommendedName>
    <alternativeName>
        <fullName evidence="1">Arginosuccinase</fullName>
    </alternativeName>
</protein>
<gene>
    <name evidence="1" type="primary">argH</name>
    <name type="ordered locus">BCE_4764</name>
</gene>
<name>ARLY_BACC1</name>
<dbReference type="EC" id="4.3.2.1" evidence="1"/>
<dbReference type="EMBL" id="AE017194">
    <property type="protein sequence ID" value="AAS43665.1"/>
    <property type="molecule type" value="Genomic_DNA"/>
</dbReference>
<dbReference type="SMR" id="Q72ZA4"/>
<dbReference type="KEGG" id="bca:BCE_4764"/>
<dbReference type="HOGENOM" id="CLU_027272_2_3_9"/>
<dbReference type="UniPathway" id="UPA00068">
    <property type="reaction ID" value="UER00114"/>
</dbReference>
<dbReference type="Proteomes" id="UP000002527">
    <property type="component" value="Chromosome"/>
</dbReference>
<dbReference type="GO" id="GO:0005829">
    <property type="term" value="C:cytosol"/>
    <property type="evidence" value="ECO:0007669"/>
    <property type="project" value="TreeGrafter"/>
</dbReference>
<dbReference type="GO" id="GO:0004056">
    <property type="term" value="F:argininosuccinate lyase activity"/>
    <property type="evidence" value="ECO:0007669"/>
    <property type="project" value="UniProtKB-UniRule"/>
</dbReference>
<dbReference type="GO" id="GO:0042450">
    <property type="term" value="P:arginine biosynthetic process via ornithine"/>
    <property type="evidence" value="ECO:0007669"/>
    <property type="project" value="InterPro"/>
</dbReference>
<dbReference type="GO" id="GO:0006526">
    <property type="term" value="P:L-arginine biosynthetic process"/>
    <property type="evidence" value="ECO:0007669"/>
    <property type="project" value="UniProtKB-UniRule"/>
</dbReference>
<dbReference type="CDD" id="cd01359">
    <property type="entry name" value="Argininosuccinate_lyase"/>
    <property type="match status" value="1"/>
</dbReference>
<dbReference type="FunFam" id="1.10.275.10:FF:000002">
    <property type="entry name" value="Argininosuccinate lyase"/>
    <property type="match status" value="1"/>
</dbReference>
<dbReference type="FunFam" id="1.10.40.30:FF:000001">
    <property type="entry name" value="Argininosuccinate lyase"/>
    <property type="match status" value="1"/>
</dbReference>
<dbReference type="FunFam" id="1.20.200.10:FF:000006">
    <property type="entry name" value="Argininosuccinate lyase"/>
    <property type="match status" value="1"/>
</dbReference>
<dbReference type="Gene3D" id="1.10.40.30">
    <property type="entry name" value="Fumarase/aspartase (C-terminal domain)"/>
    <property type="match status" value="1"/>
</dbReference>
<dbReference type="Gene3D" id="1.20.200.10">
    <property type="entry name" value="Fumarase/aspartase (Central domain)"/>
    <property type="match status" value="1"/>
</dbReference>
<dbReference type="Gene3D" id="1.10.275.10">
    <property type="entry name" value="Fumarase/aspartase (N-terminal domain)"/>
    <property type="match status" value="1"/>
</dbReference>
<dbReference type="HAMAP" id="MF_00006">
    <property type="entry name" value="Arg_succ_lyase"/>
    <property type="match status" value="1"/>
</dbReference>
<dbReference type="InterPro" id="IPR029419">
    <property type="entry name" value="Arg_succ_lyase_C"/>
</dbReference>
<dbReference type="InterPro" id="IPR009049">
    <property type="entry name" value="Argininosuccinate_lyase"/>
</dbReference>
<dbReference type="InterPro" id="IPR024083">
    <property type="entry name" value="Fumarase/histidase_N"/>
</dbReference>
<dbReference type="InterPro" id="IPR020557">
    <property type="entry name" value="Fumarate_lyase_CS"/>
</dbReference>
<dbReference type="InterPro" id="IPR000362">
    <property type="entry name" value="Fumarate_lyase_fam"/>
</dbReference>
<dbReference type="InterPro" id="IPR022761">
    <property type="entry name" value="Fumarate_lyase_N"/>
</dbReference>
<dbReference type="InterPro" id="IPR008948">
    <property type="entry name" value="L-Aspartase-like"/>
</dbReference>
<dbReference type="NCBIfam" id="TIGR00838">
    <property type="entry name" value="argH"/>
    <property type="match status" value="1"/>
</dbReference>
<dbReference type="PANTHER" id="PTHR43814">
    <property type="entry name" value="ARGININOSUCCINATE LYASE"/>
    <property type="match status" value="1"/>
</dbReference>
<dbReference type="PANTHER" id="PTHR43814:SF1">
    <property type="entry name" value="ARGININOSUCCINATE LYASE"/>
    <property type="match status" value="1"/>
</dbReference>
<dbReference type="Pfam" id="PF14698">
    <property type="entry name" value="ASL_C2"/>
    <property type="match status" value="1"/>
</dbReference>
<dbReference type="Pfam" id="PF00206">
    <property type="entry name" value="Lyase_1"/>
    <property type="match status" value="1"/>
</dbReference>
<dbReference type="PRINTS" id="PR00145">
    <property type="entry name" value="ARGSUCLYASE"/>
</dbReference>
<dbReference type="PRINTS" id="PR00149">
    <property type="entry name" value="FUMRATELYASE"/>
</dbReference>
<dbReference type="SUPFAM" id="SSF48557">
    <property type="entry name" value="L-aspartase-like"/>
    <property type="match status" value="1"/>
</dbReference>
<dbReference type="PROSITE" id="PS00163">
    <property type="entry name" value="FUMARATE_LYASES"/>
    <property type="match status" value="1"/>
</dbReference>